<feature type="chain" id="PRO_1000127191" description="Small ribosomal subunit protein uS10">
    <location>
        <begin position="1"/>
        <end position="102"/>
    </location>
</feature>
<reference key="1">
    <citation type="journal article" date="2009" name="BMC Genomics">
        <title>Genome evolution driven by host adaptations results in a more virulent and antimicrobial-resistant Streptococcus pneumoniae serotype 14.</title>
        <authorList>
            <person name="Ding F."/>
            <person name="Tang P."/>
            <person name="Hsu M.-H."/>
            <person name="Cui P."/>
            <person name="Hu S."/>
            <person name="Yu J."/>
            <person name="Chiu C.-H."/>
        </authorList>
    </citation>
    <scope>NUCLEOTIDE SEQUENCE [LARGE SCALE GENOMIC DNA]</scope>
    <source>
        <strain>CGSP14</strain>
    </source>
</reference>
<evidence type="ECO:0000255" key="1">
    <source>
        <dbReference type="HAMAP-Rule" id="MF_00508"/>
    </source>
</evidence>
<evidence type="ECO:0000305" key="2"/>
<proteinExistence type="inferred from homology"/>
<organism>
    <name type="scientific">Streptococcus pneumoniae (strain CGSP14)</name>
    <dbReference type="NCBI Taxonomy" id="516950"/>
    <lineage>
        <taxon>Bacteria</taxon>
        <taxon>Bacillati</taxon>
        <taxon>Bacillota</taxon>
        <taxon>Bacilli</taxon>
        <taxon>Lactobacillales</taxon>
        <taxon>Streptococcaceae</taxon>
        <taxon>Streptococcus</taxon>
    </lineage>
</organism>
<name>RS10_STRPS</name>
<sequence length="102" mass="11583">MANKKIRIRLKAYEHRTLDTAAAKIVESATRTGAQVAGPIPLPTERSLYTIIRATHKYKDSREQFEMRTHKRLIDIVNPTQKTVDALMKLDLPSGVNVEIKL</sequence>
<dbReference type="EMBL" id="CP001033">
    <property type="protein sequence ID" value="ACB89469.1"/>
    <property type="molecule type" value="Genomic_DNA"/>
</dbReference>
<dbReference type="RefSeq" id="WP_001284513.1">
    <property type="nucleotide sequence ID" value="NC_010582.1"/>
</dbReference>
<dbReference type="SMR" id="B2IS39"/>
<dbReference type="GeneID" id="93738956"/>
<dbReference type="KEGG" id="spw:SPCG_0217"/>
<dbReference type="HOGENOM" id="CLU_122625_1_3_9"/>
<dbReference type="GO" id="GO:1990904">
    <property type="term" value="C:ribonucleoprotein complex"/>
    <property type="evidence" value="ECO:0007669"/>
    <property type="project" value="UniProtKB-KW"/>
</dbReference>
<dbReference type="GO" id="GO:0005840">
    <property type="term" value="C:ribosome"/>
    <property type="evidence" value="ECO:0007669"/>
    <property type="project" value="UniProtKB-KW"/>
</dbReference>
<dbReference type="GO" id="GO:0003735">
    <property type="term" value="F:structural constituent of ribosome"/>
    <property type="evidence" value="ECO:0007669"/>
    <property type="project" value="InterPro"/>
</dbReference>
<dbReference type="GO" id="GO:0000049">
    <property type="term" value="F:tRNA binding"/>
    <property type="evidence" value="ECO:0007669"/>
    <property type="project" value="UniProtKB-UniRule"/>
</dbReference>
<dbReference type="GO" id="GO:0006412">
    <property type="term" value="P:translation"/>
    <property type="evidence" value="ECO:0007669"/>
    <property type="project" value="UniProtKB-UniRule"/>
</dbReference>
<dbReference type="FunFam" id="3.30.70.600:FF:000001">
    <property type="entry name" value="30S ribosomal protein S10"/>
    <property type="match status" value="1"/>
</dbReference>
<dbReference type="Gene3D" id="3.30.70.600">
    <property type="entry name" value="Ribosomal protein S10 domain"/>
    <property type="match status" value="1"/>
</dbReference>
<dbReference type="HAMAP" id="MF_00508">
    <property type="entry name" value="Ribosomal_uS10"/>
    <property type="match status" value="1"/>
</dbReference>
<dbReference type="InterPro" id="IPR001848">
    <property type="entry name" value="Ribosomal_uS10"/>
</dbReference>
<dbReference type="InterPro" id="IPR018268">
    <property type="entry name" value="Ribosomal_uS10_CS"/>
</dbReference>
<dbReference type="InterPro" id="IPR027486">
    <property type="entry name" value="Ribosomal_uS10_dom"/>
</dbReference>
<dbReference type="InterPro" id="IPR036838">
    <property type="entry name" value="Ribosomal_uS10_dom_sf"/>
</dbReference>
<dbReference type="NCBIfam" id="NF001861">
    <property type="entry name" value="PRK00596.1"/>
    <property type="match status" value="1"/>
</dbReference>
<dbReference type="NCBIfam" id="TIGR01049">
    <property type="entry name" value="rpsJ_bact"/>
    <property type="match status" value="1"/>
</dbReference>
<dbReference type="PANTHER" id="PTHR11700">
    <property type="entry name" value="30S RIBOSOMAL PROTEIN S10 FAMILY MEMBER"/>
    <property type="match status" value="1"/>
</dbReference>
<dbReference type="Pfam" id="PF00338">
    <property type="entry name" value="Ribosomal_S10"/>
    <property type="match status" value="1"/>
</dbReference>
<dbReference type="PRINTS" id="PR00971">
    <property type="entry name" value="RIBOSOMALS10"/>
</dbReference>
<dbReference type="SMART" id="SM01403">
    <property type="entry name" value="Ribosomal_S10"/>
    <property type="match status" value="1"/>
</dbReference>
<dbReference type="SUPFAM" id="SSF54999">
    <property type="entry name" value="Ribosomal protein S10"/>
    <property type="match status" value="1"/>
</dbReference>
<dbReference type="PROSITE" id="PS00361">
    <property type="entry name" value="RIBOSOMAL_S10"/>
    <property type="match status" value="1"/>
</dbReference>
<comment type="function">
    <text evidence="1">Involved in the binding of tRNA to the ribosomes.</text>
</comment>
<comment type="subunit">
    <text evidence="1">Part of the 30S ribosomal subunit.</text>
</comment>
<comment type="similarity">
    <text evidence="1">Belongs to the universal ribosomal protein uS10 family.</text>
</comment>
<accession>B2IS39</accession>
<keyword id="KW-0687">Ribonucleoprotein</keyword>
<keyword id="KW-0689">Ribosomal protein</keyword>
<protein>
    <recommendedName>
        <fullName evidence="1">Small ribosomal subunit protein uS10</fullName>
    </recommendedName>
    <alternativeName>
        <fullName evidence="2">30S ribosomal protein S10</fullName>
    </alternativeName>
</protein>
<gene>
    <name evidence="1" type="primary">rpsJ</name>
    <name type="ordered locus">SPCG_0217</name>
</gene>